<name>PAN1_EREGS</name>
<comment type="function">
    <text evidence="1">Component of the PAN1 actin cytoskeleton-regulatory complex required for the internalization of endosomes during actin-coupled endocytosis. The complex links the site of endocytosis to the cell membrane-associated actin cytoskeleton. Mediates uptake of external molecules and vacuolar degradation of plasma membrane proteins. Plays a role in the proper organization of the cell membrane-associated actin cytoskeleton and promotes its destabilization (By similarity).</text>
</comment>
<comment type="subunit">
    <text evidence="1">Component of the PAN1 actin cytoskeleton-regulatory complex.</text>
</comment>
<comment type="subcellular location">
    <subcellularLocation>
        <location evidence="1">Cell membrane</location>
        <topology evidence="1">Peripheral membrane protein</topology>
        <orientation evidence="1">Cytoplasmic side</orientation>
    </subcellularLocation>
    <subcellularLocation>
        <location evidence="1">Endosome membrane</location>
        <topology evidence="1">Peripheral membrane protein</topology>
        <orientation evidence="1">Cytoplasmic side</orientation>
    </subcellularLocation>
    <subcellularLocation>
        <location evidence="1">Cytoplasm</location>
        <location evidence="1">Cytoskeleton</location>
        <location evidence="1">Actin patch</location>
    </subcellularLocation>
    <text evidence="1">Cytoplasmic and cortical actin patches.</text>
</comment>
<comment type="similarity">
    <text evidence="6">Belongs to the PAN1 family.</text>
</comment>
<keyword id="KW-0009">Actin-binding</keyword>
<keyword id="KW-0106">Calcium</keyword>
<keyword id="KW-1003">Cell membrane</keyword>
<keyword id="KW-0175">Coiled coil</keyword>
<keyword id="KW-0963">Cytoplasm</keyword>
<keyword id="KW-0206">Cytoskeleton</keyword>
<keyword id="KW-0254">Endocytosis</keyword>
<keyword id="KW-0967">Endosome</keyword>
<keyword id="KW-0472">Membrane</keyword>
<keyword id="KW-0479">Metal-binding</keyword>
<keyword id="KW-1185">Reference proteome</keyword>
<keyword id="KW-0677">Repeat</keyword>
<evidence type="ECO:0000250" key="1"/>
<evidence type="ECO:0000255" key="2"/>
<evidence type="ECO:0000255" key="3">
    <source>
        <dbReference type="PROSITE-ProRule" id="PRU00077"/>
    </source>
</evidence>
<evidence type="ECO:0000255" key="4">
    <source>
        <dbReference type="PROSITE-ProRule" id="PRU00448"/>
    </source>
</evidence>
<evidence type="ECO:0000256" key="5">
    <source>
        <dbReference type="SAM" id="MobiDB-lite"/>
    </source>
</evidence>
<evidence type="ECO:0000305" key="6"/>
<organism>
    <name type="scientific">Eremothecium gossypii (strain ATCC 10895 / CBS 109.51 / FGSC 9923 / NRRL Y-1056)</name>
    <name type="common">Yeast</name>
    <name type="synonym">Ashbya gossypii</name>
    <dbReference type="NCBI Taxonomy" id="284811"/>
    <lineage>
        <taxon>Eukaryota</taxon>
        <taxon>Fungi</taxon>
        <taxon>Dikarya</taxon>
        <taxon>Ascomycota</taxon>
        <taxon>Saccharomycotina</taxon>
        <taxon>Saccharomycetes</taxon>
        <taxon>Saccharomycetales</taxon>
        <taxon>Saccharomycetaceae</taxon>
        <taxon>Eremothecium</taxon>
    </lineage>
</organism>
<protein>
    <recommendedName>
        <fullName>Actin cytoskeleton-regulatory complex protein PAN1</fullName>
    </recommendedName>
</protein>
<sequence length="1248" mass="134238">MYNPYQQSGGPAYGADGYGQQGYGQAYGQQGFGQAYGQQGGGYEAGPAATYTAGAAQPLRPTATGFVNAAASRGLNTELKIPLFRLSFLTAADQAKFETLFRSAVRPGATTITGEDCKHILLRSGLSPFQLGLIWTLCDTNNAGELLFPEFALAMHLVNGVLQGERIPRALDSKVKNEVSSFVDLINFSVGSNSPPPEGQKARTPFDALTQGAGTLQPQATGFMPPTSFGVPQATGLGFGQAPMQPQATGYMPPTSFGAGLGAHTTGGNALASQMTGGLQQYAGGAFQNYQATGGKGLGAQVTGGFAQQPAGANPLLSQLTGGQGFQQQRQPTGANSLMPQVTGGFQQPSNAIGSQPPAMGMPQGLSQGQSVGLQAQATGFLPPSQFAPTAPLAAQKTGFGNNEIYSHAAFASGFPAGEDDKLTPEEKSLFYNIFDTYDTDKTGQLHFKVAAEIFRKSGLNRSELERIWNLCDTNNSGQLNRQEFAVGMHLIYRRINGHNLPHTLPPSLVPSSTRILNNVKNQLKVSSSSKKEPTRIDGLAYKNNDDDILPSFKNRRKTFTEPRQSKDNKTVDDLKKLVEEKRRKLESERSQLSLRQKDQQIKDEETMRHVDSLMHQIRSLPMKKHAAVPSDMKARFDSLTSSISTLFNNIAEIDDEITNAKVHLYRLKNPSSIVGSGPNGEVTEYDQKKARQKAVLAARMAALTGTPIETPSEADLRREEQGLNEEVAKIKEESRKNQEILNDIKSSITEISAPISTFIYGSGNADKDPAYERWELGIGLEPEVCDFIRKLKETQTQAQAQEQARAQEQARAQEQARAQEKARAQEKARAQEQARVQEQARAQEQARAQEQARAQEQARAQEQARAQEQAKADAASRESTRSPEEFARWPQDQSPSHPGLTASVSPQSQSVSVSNRGTPQLGQQQMGSGFYSDYQSADARAAYVRQQSQLKQPAPAPTSTTDFNSEDEEDEEERSLREQLAALKLKRKAEKEAKLAVGRNQTGASQDPAVRASPDEWDEQPSRPSHTPVYSTSPAMASQGELPKQGSSAPHLHPTTTGDRSPFFKQKQGSTSTFDLKAAEQQRRLQRGLDDGDGWSDDEDSSSKPTQPTATTSATDIPSSGADSGARAPVSAAPASIVRPDGSTATQPPVVPSPPVPQPGPSSGAPIPIAPPLPTLNGQQAGPAPSVAPTGHVERAASQPQINDGNEDDEDSDVLSIPESVESEDGKDQYTTAIPEIPYIPPPPPLP</sequence>
<reference key="1">
    <citation type="journal article" date="2004" name="Science">
        <title>The Ashbya gossypii genome as a tool for mapping the ancient Saccharomyces cerevisiae genome.</title>
        <authorList>
            <person name="Dietrich F.S."/>
            <person name="Voegeli S."/>
            <person name="Brachat S."/>
            <person name="Lerch A."/>
            <person name="Gates K."/>
            <person name="Steiner S."/>
            <person name="Mohr C."/>
            <person name="Poehlmann R."/>
            <person name="Luedi P."/>
            <person name="Choi S."/>
            <person name="Wing R.A."/>
            <person name="Flavier A."/>
            <person name="Gaffney T.D."/>
            <person name="Philippsen P."/>
        </authorList>
    </citation>
    <scope>NUCLEOTIDE SEQUENCE [LARGE SCALE GENOMIC DNA]</scope>
    <source>
        <strain>ATCC 10895 / CBS 109.51 / FGSC 9923 / NRRL Y-1056</strain>
    </source>
</reference>
<reference key="2">
    <citation type="journal article" date="2013" name="G3 (Bethesda)">
        <title>Genomes of Ashbya fungi isolated from insects reveal four mating-type loci, numerous translocations, lack of transposons, and distinct gene duplications.</title>
        <authorList>
            <person name="Dietrich F.S."/>
            <person name="Voegeli S."/>
            <person name="Kuo S."/>
            <person name="Philippsen P."/>
        </authorList>
    </citation>
    <scope>GENOME REANNOTATION</scope>
    <scope>SEQUENCE REVISION TO 300; 308; 318; 331-332; 875; 942 AND C-TERMINUS</scope>
    <source>
        <strain>ATCC 10895 / CBS 109.51 / FGSC 9923 / NRRL Y-1056</strain>
    </source>
</reference>
<accession>Q75AA0</accession>
<gene>
    <name type="primary">PAN1</name>
    <name type="ordered locus">ADR018C</name>
</gene>
<feature type="chain" id="PRO_0000349463" description="Actin cytoskeleton-regulatory complex protein PAN1">
    <location>
        <begin position="1"/>
        <end position="1248"/>
    </location>
</feature>
<feature type="domain" description="EH 1" evidence="3">
    <location>
        <begin position="93"/>
        <end position="182"/>
    </location>
</feature>
<feature type="domain" description="EF-hand 1" evidence="4">
    <location>
        <begin position="126"/>
        <end position="161"/>
    </location>
</feature>
<feature type="domain" description="EF-hand 2" evidence="4">
    <location>
        <begin position="426"/>
        <end position="449"/>
    </location>
</feature>
<feature type="domain" description="EH 2" evidence="3">
    <location>
        <begin position="427"/>
        <end position="516"/>
    </location>
</feature>
<feature type="domain" description="EF-hand 3" evidence="4">
    <location>
        <begin position="460"/>
        <end position="495"/>
    </location>
</feature>
<feature type="region of interest" description="Disordered" evidence="5">
    <location>
        <begin position="313"/>
        <end position="337"/>
    </location>
</feature>
<feature type="region of interest" description="Disordered" evidence="5">
    <location>
        <begin position="548"/>
        <end position="575"/>
    </location>
</feature>
<feature type="region of interest" description="Disordered" evidence="5">
    <location>
        <begin position="800"/>
        <end position="1248"/>
    </location>
</feature>
<feature type="coiled-coil region" evidence="2">
    <location>
        <begin position="566"/>
        <end position="601"/>
    </location>
</feature>
<feature type="coiled-coil region" evidence="2">
    <location>
        <begin position="713"/>
        <end position="746"/>
    </location>
</feature>
<feature type="coiled-coil region" evidence="2">
    <location>
        <begin position="787"/>
        <end position="879"/>
    </location>
</feature>
<feature type="coiled-coil region" evidence="2">
    <location>
        <begin position="965"/>
        <end position="997"/>
    </location>
</feature>
<feature type="compositionally biased region" description="Polar residues" evidence="5">
    <location>
        <begin position="316"/>
        <end position="337"/>
    </location>
</feature>
<feature type="compositionally biased region" description="Basic and acidic residues" evidence="5">
    <location>
        <begin position="559"/>
        <end position="575"/>
    </location>
</feature>
<feature type="compositionally biased region" description="Low complexity" evidence="5">
    <location>
        <begin position="800"/>
        <end position="817"/>
    </location>
</feature>
<feature type="compositionally biased region" description="Basic and acidic residues" evidence="5">
    <location>
        <begin position="818"/>
        <end position="833"/>
    </location>
</feature>
<feature type="compositionally biased region" description="Low complexity" evidence="5">
    <location>
        <begin position="834"/>
        <end position="868"/>
    </location>
</feature>
<feature type="compositionally biased region" description="Basic and acidic residues" evidence="5">
    <location>
        <begin position="869"/>
        <end position="888"/>
    </location>
</feature>
<feature type="compositionally biased region" description="Low complexity" evidence="5">
    <location>
        <begin position="904"/>
        <end position="915"/>
    </location>
</feature>
<feature type="compositionally biased region" description="Polar residues" evidence="5">
    <location>
        <begin position="916"/>
        <end position="928"/>
    </location>
</feature>
<feature type="compositionally biased region" description="Polar residues" evidence="5">
    <location>
        <begin position="946"/>
        <end position="964"/>
    </location>
</feature>
<feature type="compositionally biased region" description="Acidic residues" evidence="5">
    <location>
        <begin position="965"/>
        <end position="974"/>
    </location>
</feature>
<feature type="compositionally biased region" description="Polar residues" evidence="5">
    <location>
        <begin position="1023"/>
        <end position="1037"/>
    </location>
</feature>
<feature type="compositionally biased region" description="Basic and acidic residues" evidence="5">
    <location>
        <begin position="1078"/>
        <end position="1091"/>
    </location>
</feature>
<feature type="compositionally biased region" description="Acidic residues" evidence="5">
    <location>
        <begin position="1092"/>
        <end position="1101"/>
    </location>
</feature>
<feature type="compositionally biased region" description="Polar residues" evidence="5">
    <location>
        <begin position="1105"/>
        <end position="1123"/>
    </location>
</feature>
<feature type="compositionally biased region" description="Pro residues" evidence="5">
    <location>
        <begin position="1150"/>
        <end position="1161"/>
    </location>
</feature>
<feature type="compositionally biased region" description="Pro residues" evidence="5">
    <location>
        <begin position="1239"/>
        <end position="1248"/>
    </location>
</feature>
<feature type="binding site" evidence="4">
    <location>
        <position position="473"/>
    </location>
    <ligand>
        <name>Ca(2+)</name>
        <dbReference type="ChEBI" id="CHEBI:29108"/>
    </ligand>
</feature>
<feature type="binding site" evidence="4">
    <location>
        <position position="475"/>
    </location>
    <ligand>
        <name>Ca(2+)</name>
        <dbReference type="ChEBI" id="CHEBI:29108"/>
    </ligand>
</feature>
<feature type="binding site" evidence="4">
    <location>
        <position position="477"/>
    </location>
    <ligand>
        <name>Ca(2+)</name>
        <dbReference type="ChEBI" id="CHEBI:29108"/>
    </ligand>
</feature>
<feature type="binding site" evidence="4">
    <location>
        <position position="479"/>
    </location>
    <ligand>
        <name>Ca(2+)</name>
        <dbReference type="ChEBI" id="CHEBI:29108"/>
    </ligand>
</feature>
<feature type="binding site" evidence="4">
    <location>
        <position position="484"/>
    </location>
    <ligand>
        <name>Ca(2+)</name>
        <dbReference type="ChEBI" id="CHEBI:29108"/>
    </ligand>
</feature>
<proteinExistence type="inferred from homology"/>
<dbReference type="EMBL" id="AE016817">
    <property type="protein sequence ID" value="AAS51938.2"/>
    <property type="molecule type" value="Genomic_DNA"/>
</dbReference>
<dbReference type="RefSeq" id="NP_984114.2">
    <property type="nucleotide sequence ID" value="NM_209467.2"/>
</dbReference>
<dbReference type="SMR" id="Q75AA0"/>
<dbReference type="FunCoup" id="Q75AA0">
    <property type="interactions" value="74"/>
</dbReference>
<dbReference type="STRING" id="284811.Q75AA0"/>
<dbReference type="EnsemblFungi" id="AAS51938">
    <property type="protein sequence ID" value="AAS51938"/>
    <property type="gene ID" value="AGOS_ADR018C"/>
</dbReference>
<dbReference type="GeneID" id="4620263"/>
<dbReference type="KEGG" id="ago:AGOS_ADR018C"/>
<dbReference type="eggNOG" id="KOG0998">
    <property type="taxonomic scope" value="Eukaryota"/>
</dbReference>
<dbReference type="HOGENOM" id="CLU_006042_0_0_1"/>
<dbReference type="InParanoid" id="Q75AA0"/>
<dbReference type="OMA" id="GMPGQWG"/>
<dbReference type="OrthoDB" id="2015333at2759"/>
<dbReference type="Proteomes" id="UP000000591">
    <property type="component" value="Chromosome IV"/>
</dbReference>
<dbReference type="GO" id="GO:0030479">
    <property type="term" value="C:actin cortical patch"/>
    <property type="evidence" value="ECO:0007669"/>
    <property type="project" value="UniProtKB-SubCell"/>
</dbReference>
<dbReference type="GO" id="GO:1990964">
    <property type="term" value="C:actin cytoskeleton-regulatory complex"/>
    <property type="evidence" value="ECO:0007669"/>
    <property type="project" value="EnsemblFungi"/>
</dbReference>
<dbReference type="GO" id="GO:0005737">
    <property type="term" value="C:cytoplasm"/>
    <property type="evidence" value="ECO:0000318"/>
    <property type="project" value="GO_Central"/>
</dbReference>
<dbReference type="GO" id="GO:0010008">
    <property type="term" value="C:endosome membrane"/>
    <property type="evidence" value="ECO:0007669"/>
    <property type="project" value="UniProtKB-SubCell"/>
</dbReference>
<dbReference type="GO" id="GO:0005634">
    <property type="term" value="C:nucleus"/>
    <property type="evidence" value="ECO:0007669"/>
    <property type="project" value="EnsemblFungi"/>
</dbReference>
<dbReference type="GO" id="GO:0005886">
    <property type="term" value="C:plasma membrane"/>
    <property type="evidence" value="ECO:0000318"/>
    <property type="project" value="GO_Central"/>
</dbReference>
<dbReference type="GO" id="GO:0003779">
    <property type="term" value="F:actin binding"/>
    <property type="evidence" value="ECO:0007669"/>
    <property type="project" value="UniProtKB-KW"/>
</dbReference>
<dbReference type="GO" id="GO:0071933">
    <property type="term" value="F:Arp2/3 complex binding"/>
    <property type="evidence" value="ECO:0007669"/>
    <property type="project" value="EnsemblFungi"/>
</dbReference>
<dbReference type="GO" id="GO:0005509">
    <property type="term" value="F:calcium ion binding"/>
    <property type="evidence" value="ECO:0007669"/>
    <property type="project" value="InterPro"/>
</dbReference>
<dbReference type="GO" id="GO:0000147">
    <property type="term" value="P:actin cortical patch assembly"/>
    <property type="evidence" value="ECO:0007669"/>
    <property type="project" value="EnsemblFungi"/>
</dbReference>
<dbReference type="GO" id="GO:0007120">
    <property type="term" value="P:axial cellular bud site selection"/>
    <property type="evidence" value="ECO:0007669"/>
    <property type="project" value="EnsemblFungi"/>
</dbReference>
<dbReference type="GO" id="GO:0007121">
    <property type="term" value="P:bipolar cellular bud site selection"/>
    <property type="evidence" value="ECO:0007669"/>
    <property type="project" value="EnsemblFungi"/>
</dbReference>
<dbReference type="GO" id="GO:0071555">
    <property type="term" value="P:cell wall organization"/>
    <property type="evidence" value="ECO:0007669"/>
    <property type="project" value="EnsemblFungi"/>
</dbReference>
<dbReference type="GO" id="GO:0006897">
    <property type="term" value="P:endocytosis"/>
    <property type="evidence" value="ECO:0000318"/>
    <property type="project" value="GO_Central"/>
</dbReference>
<dbReference type="GO" id="GO:0016197">
    <property type="term" value="P:endosomal transport"/>
    <property type="evidence" value="ECO:0000318"/>
    <property type="project" value="GO_Central"/>
</dbReference>
<dbReference type="GO" id="GO:2000601">
    <property type="term" value="P:positive regulation of Arp2/3 complex-mediated actin nucleation"/>
    <property type="evidence" value="ECO:0007669"/>
    <property type="project" value="EnsemblFungi"/>
</dbReference>
<dbReference type="GO" id="GO:0061709">
    <property type="term" value="P:reticulophagy"/>
    <property type="evidence" value="ECO:0007669"/>
    <property type="project" value="EnsemblFungi"/>
</dbReference>
<dbReference type="CDD" id="cd00052">
    <property type="entry name" value="EH"/>
    <property type="match status" value="2"/>
</dbReference>
<dbReference type="FunFam" id="1.10.238.10:FF:000349">
    <property type="entry name" value="Actin cytoskeleton-regulatory complex protein PAN1"/>
    <property type="match status" value="1"/>
</dbReference>
<dbReference type="Gene3D" id="1.10.238.10">
    <property type="entry name" value="EF-hand"/>
    <property type="match status" value="2"/>
</dbReference>
<dbReference type="InterPro" id="IPR013182">
    <property type="entry name" value="DUF1720"/>
</dbReference>
<dbReference type="InterPro" id="IPR011992">
    <property type="entry name" value="EF-hand-dom_pair"/>
</dbReference>
<dbReference type="InterPro" id="IPR018247">
    <property type="entry name" value="EF_Hand_1_Ca_BS"/>
</dbReference>
<dbReference type="InterPro" id="IPR002048">
    <property type="entry name" value="EF_hand_dom"/>
</dbReference>
<dbReference type="InterPro" id="IPR000261">
    <property type="entry name" value="EH_dom"/>
</dbReference>
<dbReference type="PANTHER" id="PTHR11216:SF173">
    <property type="entry name" value="ACTIN CYTOSKELETON-REGULATORY COMPLEX PROTEIN PAN1"/>
    <property type="match status" value="1"/>
</dbReference>
<dbReference type="PANTHER" id="PTHR11216">
    <property type="entry name" value="EH DOMAIN"/>
    <property type="match status" value="1"/>
</dbReference>
<dbReference type="Pfam" id="PF08226">
    <property type="entry name" value="DUF1720"/>
    <property type="match status" value="2"/>
</dbReference>
<dbReference type="Pfam" id="PF12763">
    <property type="entry name" value="EH"/>
    <property type="match status" value="2"/>
</dbReference>
<dbReference type="SMART" id="SM00054">
    <property type="entry name" value="EFh"/>
    <property type="match status" value="3"/>
</dbReference>
<dbReference type="SMART" id="SM00027">
    <property type="entry name" value="EH"/>
    <property type="match status" value="2"/>
</dbReference>
<dbReference type="SUPFAM" id="SSF47473">
    <property type="entry name" value="EF-hand"/>
    <property type="match status" value="2"/>
</dbReference>
<dbReference type="PROSITE" id="PS00018">
    <property type="entry name" value="EF_HAND_1"/>
    <property type="match status" value="1"/>
</dbReference>
<dbReference type="PROSITE" id="PS50222">
    <property type="entry name" value="EF_HAND_2"/>
    <property type="match status" value="3"/>
</dbReference>
<dbReference type="PROSITE" id="PS50031">
    <property type="entry name" value="EH"/>
    <property type="match status" value="2"/>
</dbReference>